<reference key="1">
    <citation type="journal article" date="1990" name="Toxicon">
        <title>Purification and characterisation of proteins with cardiac stimulatory and haemolytic activity from the anemone Actinia tenebrosa.</title>
        <authorList>
            <person name="Norton R.S."/>
            <person name="Bobek G."/>
            <person name="Ivanov J.O."/>
            <person name="Thomson M."/>
            <person name="Fiala-Beer E."/>
            <person name="Moritz R.L."/>
            <person name="Simpson R.J."/>
        </authorList>
    </citation>
    <scope>PROTEIN SEQUENCE</scope>
</reference>
<reference key="2">
    <citation type="journal article" date="2009" name="Toxicon">
        <title>Molecular mechanism of pore formation by actinoporins.</title>
        <authorList>
            <person name="Kristan K.C."/>
            <person name="Viero G."/>
            <person name="Dalla Serra M."/>
            <person name="Macek P."/>
            <person name="Anderluh G."/>
        </authorList>
    </citation>
    <scope>REVIEW</scope>
</reference>
<feature type="chain" id="PRO_0000221530" description="Cytolysin tenebrosin-A">
    <location>
        <begin position="1"/>
        <end position="20" status="greater than"/>
    </location>
</feature>
<feature type="region of interest" description="Plays an important role in the hemolytic activity" evidence="2">
    <location>
        <begin position="3"/>
        <end position="12"/>
    </location>
</feature>
<feature type="region of interest" description="N-terminal region" evidence="3">
    <location>
        <begin position="11"/>
        <end position="20" status="greater than"/>
    </location>
</feature>
<feature type="non-terminal residue">
    <location>
        <position position="20"/>
    </location>
</feature>
<sequence length="20" mass="1974">NAAVAGAVIEGATLTFEVLQ</sequence>
<comment type="function">
    <text>Pore-forming protein that forms cations-selective hydrophilic pores of around 1 nm and causes cardiac stimulation and cytolysis. Pore formation is a multi-step process that involves specific recognition of membrane sphingomyelin (but neither cholesterol nor phosphatidylcholine) using aromatic rich region and adjacent phosphocholine (POC) binding site, firm binding to the membrane (mainly driven by hydrophobic interactions) accompanied by the transfer of the N-terminal region to the lipid-water interface and finally pore formation after oligomerization of monomers.</text>
</comment>
<comment type="subunit">
    <text evidence="1">Octamer or nonamer in membranes. Monomer in the soluble state.</text>
</comment>
<comment type="subcellular location">
    <subcellularLocation>
        <location evidence="1">Secreted</location>
    </subcellularLocation>
    <subcellularLocation>
        <location evidence="2">Nematocyst</location>
    </subcellularLocation>
    <subcellularLocation>
        <location evidence="1">Target cell membrane</location>
    </subcellularLocation>
    <text evidence="1">Forms an alpha-helical membrane channel in the prey.</text>
</comment>
<comment type="domain">
    <text evidence="3">Composed of a long N-terminal alpha-helix and a core region rich in beta-sheet structures. Before the pore formation, the alpha-helix binds the lipid membrane, partitions into the lipid-water interface and stabilizes the monomeric molecule on the membrane. Finally, it traverses the bilayer, thus forming the transmembrane pore.</text>
</comment>
<comment type="similarity">
    <text evidence="5">Belongs to the actinoporin family. Sea anemone subfamily.</text>
</comment>
<dbReference type="PIR" id="A34016">
    <property type="entry name" value="A34016"/>
</dbReference>
<dbReference type="TCDB" id="1.C.38.1.3">
    <property type="family name" value="the pore-forming equinatoxin (equinatoxin) family"/>
</dbReference>
<dbReference type="InParanoid" id="P30833"/>
<dbReference type="Proteomes" id="UP000515163">
    <property type="component" value="Unplaced"/>
</dbReference>
<dbReference type="GO" id="GO:0005576">
    <property type="term" value="C:extracellular region"/>
    <property type="evidence" value="ECO:0007669"/>
    <property type="project" value="UniProtKB-SubCell"/>
</dbReference>
<dbReference type="GO" id="GO:0016020">
    <property type="term" value="C:membrane"/>
    <property type="evidence" value="ECO:0007669"/>
    <property type="project" value="UniProtKB-KW"/>
</dbReference>
<dbReference type="GO" id="GO:0042151">
    <property type="term" value="C:nematocyst"/>
    <property type="evidence" value="ECO:0007669"/>
    <property type="project" value="UniProtKB-SubCell"/>
</dbReference>
<dbReference type="GO" id="GO:0044218">
    <property type="term" value="C:other organism cell membrane"/>
    <property type="evidence" value="ECO:0007669"/>
    <property type="project" value="UniProtKB-KW"/>
</dbReference>
<dbReference type="GO" id="GO:0090729">
    <property type="term" value="F:toxin activity"/>
    <property type="evidence" value="ECO:0007669"/>
    <property type="project" value="UniProtKB-KW"/>
</dbReference>
<dbReference type="GO" id="GO:0031640">
    <property type="term" value="P:killing of cells of another organism"/>
    <property type="evidence" value="ECO:0007669"/>
    <property type="project" value="UniProtKB-KW"/>
</dbReference>
<dbReference type="GO" id="GO:0006811">
    <property type="term" value="P:monoatomic ion transport"/>
    <property type="evidence" value="ECO:0007669"/>
    <property type="project" value="UniProtKB-KW"/>
</dbReference>
<organism>
    <name type="scientific">Actinia tenebrosa</name>
    <name type="common">Australian red waratah sea anemone</name>
    <dbReference type="NCBI Taxonomy" id="6105"/>
    <lineage>
        <taxon>Eukaryota</taxon>
        <taxon>Metazoa</taxon>
        <taxon>Cnidaria</taxon>
        <taxon>Anthozoa</taxon>
        <taxon>Hexacorallia</taxon>
        <taxon>Actiniaria</taxon>
        <taxon>Actiniidae</taxon>
        <taxon>Actinia</taxon>
    </lineage>
</organism>
<proteinExistence type="evidence at protein level"/>
<evidence type="ECO:0000250" key="1">
    <source>
        <dbReference type="UniProtKB" id="B9W5G6"/>
    </source>
</evidence>
<evidence type="ECO:0000250" key="2">
    <source>
        <dbReference type="UniProtKB" id="P07845"/>
    </source>
</evidence>
<evidence type="ECO:0000250" key="3">
    <source>
        <dbReference type="UniProtKB" id="P61914"/>
    </source>
</evidence>
<evidence type="ECO:0000303" key="4">
    <source>
    </source>
</evidence>
<evidence type="ECO:0000305" key="5"/>
<name>ACTPA_ACTTE</name>
<accession>P30833</accession>
<protein>
    <recommendedName>
        <fullName evidence="4">Cytolysin tenebrosin-A</fullName>
    </recommendedName>
    <alternativeName>
        <fullName evidence="5">DELTA-actitoxin</fullName>
    </alternativeName>
</protein>
<keyword id="KW-0204">Cytolysis</keyword>
<keyword id="KW-0903">Direct protein sequencing</keyword>
<keyword id="KW-0406">Ion transport</keyword>
<keyword id="KW-0472">Membrane</keyword>
<keyword id="KW-0166">Nematocyst</keyword>
<keyword id="KW-1185">Reference proteome</keyword>
<keyword id="KW-0964">Secreted</keyword>
<keyword id="KW-1052">Target cell membrane</keyword>
<keyword id="KW-1053">Target membrane</keyword>
<keyword id="KW-0800">Toxin</keyword>
<keyword id="KW-0812">Transmembrane</keyword>
<keyword id="KW-0813">Transport</keyword>